<comment type="function">
    <text evidence="1 2">Catalytically inactive regulatory factor of DNA methyltransferases that can either promote or inhibit DNA methylation depending on the context. Essential for the function of DNMT3A and DNMT3B: activates DNMT3A and DNMT3B by binding to their catalytic domain. Acts by accelerating the binding of DNA and S-adenosyl-L-methionine (AdoMet) to the methyltransferases and dissociates from the complex after DNA binding to the methyltransferases (By similarity). Recognizes unmethylated histone H3 lysine 4 (H3K4me0) and induces de novo DNA methylation by recruitment or activation of DNMT3 (By similarity). Plays a key role in embryonic stem cells and germ cells. In germ cells, required for the methylation of imprinted loci together with DNMT3A. In male germ cells, specifically required to methylate retrotransposons, preventing their mobilization. Plays a key role in embryonic stem cells (ESCs) by acting both as an positive and negative regulator of DNA methylation. While it promotes DNA methylation of housekeeping genes together with DNMT3A and DNMT3B, it also acts as an inhibitor of DNA methylation at the promoter of bivalent genes. Interacts with the EZH2 component of the PRC2/EED-EZH2 complex, preventing interaction of DNMT3A and DNMT3B with the PRC2/EED-EZH2 complex, leading to maintain low methylation levels at the promoters of bivalent genes. Promotes differentiation of ESCs into primordial germ cells by inhibiting DNA methylation at the promoter of RHOX5, thereby activating its expression (By similarity).</text>
</comment>
<comment type="subunit">
    <text evidence="1 2">Homodimer (By similarity). Heterotetramer composed of 1 DNMT3A homodimer and 2 DNMT3L subunits (DNMT3L-DNMT3A-DNMT3A-DNMT3L) (By similarity). Interacts with histone H3 (via N-terminus); interaction is strongly inhibited by methylation at lysine 4 (H3K4me) (By similarity). Interacts with EZH2; the interaction is direct (By similarity). Interacts with SPOCD1 (By similarity).</text>
</comment>
<comment type="subcellular location">
    <subcellularLocation>
        <location evidence="5">Nucleus</location>
    </subcellularLocation>
</comment>
<evidence type="ECO:0000250" key="1">
    <source>
        <dbReference type="UniProtKB" id="Q9CWR8"/>
    </source>
</evidence>
<evidence type="ECO:0000250" key="2">
    <source>
        <dbReference type="UniProtKB" id="Q9UJW3"/>
    </source>
</evidence>
<evidence type="ECO:0000255" key="3">
    <source>
        <dbReference type="PROSITE-ProRule" id="PRU00865"/>
    </source>
</evidence>
<evidence type="ECO:0000256" key="4">
    <source>
        <dbReference type="SAM" id="MobiDB-lite"/>
    </source>
</evidence>
<evidence type="ECO:0000305" key="5"/>
<gene>
    <name type="primary">Dnmt3l</name>
</gene>
<protein>
    <recommendedName>
        <fullName>DNA (cytosine-5)-methyltransferase 3-like</fullName>
    </recommendedName>
</protein>
<proteinExistence type="evidence at transcript level"/>
<dbReference type="EMBL" id="AABR03116801">
    <property type="status" value="NOT_ANNOTATED_CDS"/>
    <property type="molecule type" value="Genomic_DNA"/>
</dbReference>
<dbReference type="EMBL" id="AABR03116733">
    <property type="status" value="NOT_ANNOTATED_CDS"/>
    <property type="molecule type" value="Genomic_DNA"/>
</dbReference>
<dbReference type="EMBL" id="BN000398">
    <property type="protein sequence ID" value="CAE52320.1"/>
    <property type="molecule type" value="mRNA"/>
</dbReference>
<dbReference type="RefSeq" id="NP_001003964.1">
    <property type="nucleotide sequence ID" value="NM_001003964.1"/>
</dbReference>
<dbReference type="SMR" id="Q1LZ50"/>
<dbReference type="FunCoup" id="Q1LZ50">
    <property type="interactions" value="37"/>
</dbReference>
<dbReference type="STRING" id="10116.ENSRNOP00000001610"/>
<dbReference type="PhosphoSitePlus" id="Q1LZ50"/>
<dbReference type="PaxDb" id="10116-ENSRNOP00000001610"/>
<dbReference type="GeneID" id="309680"/>
<dbReference type="KEGG" id="rno:309680"/>
<dbReference type="AGR" id="RGD:1303239"/>
<dbReference type="CTD" id="29947"/>
<dbReference type="RGD" id="1303239">
    <property type="gene designation" value="Dnmt3l"/>
</dbReference>
<dbReference type="eggNOG" id="ENOG502SIGQ">
    <property type="taxonomic scope" value="Eukaryota"/>
</dbReference>
<dbReference type="InParanoid" id="Q1LZ50"/>
<dbReference type="OrthoDB" id="641149at2759"/>
<dbReference type="PhylomeDB" id="Q1LZ50"/>
<dbReference type="PRO" id="PR:Q1LZ50"/>
<dbReference type="Proteomes" id="UP000002494">
    <property type="component" value="Unplaced"/>
</dbReference>
<dbReference type="GO" id="GO:1902494">
    <property type="term" value="C:catalytic complex"/>
    <property type="evidence" value="ECO:0000266"/>
    <property type="project" value="RGD"/>
</dbReference>
<dbReference type="GO" id="GO:0000794">
    <property type="term" value="C:condensed nuclear chromosome"/>
    <property type="evidence" value="ECO:0000266"/>
    <property type="project" value="RGD"/>
</dbReference>
<dbReference type="GO" id="GO:0005737">
    <property type="term" value="C:cytoplasm"/>
    <property type="evidence" value="ECO:0000266"/>
    <property type="project" value="RGD"/>
</dbReference>
<dbReference type="GO" id="GO:0035098">
    <property type="term" value="C:ESC/E(Z) complex"/>
    <property type="evidence" value="ECO:0000266"/>
    <property type="project" value="RGD"/>
</dbReference>
<dbReference type="GO" id="GO:0000792">
    <property type="term" value="C:heterochromatin"/>
    <property type="evidence" value="ECO:0000266"/>
    <property type="project" value="RGD"/>
</dbReference>
<dbReference type="GO" id="GO:0005634">
    <property type="term" value="C:nucleus"/>
    <property type="evidence" value="ECO:0000266"/>
    <property type="project" value="RGD"/>
</dbReference>
<dbReference type="GO" id="GO:0008047">
    <property type="term" value="F:enzyme activator activity"/>
    <property type="evidence" value="ECO:0000266"/>
    <property type="project" value="RGD"/>
</dbReference>
<dbReference type="GO" id="GO:0019899">
    <property type="term" value="F:enzyme binding"/>
    <property type="evidence" value="ECO:0000266"/>
    <property type="project" value="RGD"/>
</dbReference>
<dbReference type="GO" id="GO:0008270">
    <property type="term" value="F:zinc ion binding"/>
    <property type="evidence" value="ECO:0007669"/>
    <property type="project" value="UniProtKB-KW"/>
</dbReference>
<dbReference type="GO" id="GO:0141068">
    <property type="term" value="P:autosome genomic imprinting"/>
    <property type="evidence" value="ECO:0000266"/>
    <property type="project" value="RGD"/>
</dbReference>
<dbReference type="GO" id="GO:0060718">
    <property type="term" value="P:chorionic trophoblast cell differentiation"/>
    <property type="evidence" value="ECO:0000266"/>
    <property type="project" value="RGD"/>
</dbReference>
<dbReference type="GO" id="GO:0006346">
    <property type="term" value="P:DNA methylation-dependent constitutive heterochromatin formation"/>
    <property type="evidence" value="ECO:0000250"/>
    <property type="project" value="UniProtKB"/>
</dbReference>
<dbReference type="GO" id="GO:0044726">
    <property type="term" value="P:epigenetic programing of female pronucleus"/>
    <property type="evidence" value="ECO:0000266"/>
    <property type="project" value="RGD"/>
</dbReference>
<dbReference type="GO" id="GO:0071514">
    <property type="term" value="P:genomic imprinting"/>
    <property type="evidence" value="ECO:0000250"/>
    <property type="project" value="UniProtKB"/>
</dbReference>
<dbReference type="GO" id="GO:0007141">
    <property type="term" value="P:male meiosis I"/>
    <property type="evidence" value="ECO:0000250"/>
    <property type="project" value="UniProtKB"/>
</dbReference>
<dbReference type="GO" id="GO:0032259">
    <property type="term" value="P:methylation"/>
    <property type="evidence" value="ECO:0000266"/>
    <property type="project" value="RGD"/>
</dbReference>
<dbReference type="GO" id="GO:0090310">
    <property type="term" value="P:negative regulation of DNA methylation-dependent heterochromatin formation"/>
    <property type="evidence" value="ECO:0000250"/>
    <property type="project" value="UniProtKB"/>
</dbReference>
<dbReference type="GO" id="GO:0045892">
    <property type="term" value="P:negative regulation of DNA-templated transcription"/>
    <property type="evidence" value="ECO:0000318"/>
    <property type="project" value="GO_Central"/>
</dbReference>
<dbReference type="GO" id="GO:0044027">
    <property type="term" value="P:negative regulation of gene expression via chromosomal CpG island methylation"/>
    <property type="evidence" value="ECO:0000266"/>
    <property type="project" value="RGD"/>
</dbReference>
<dbReference type="GO" id="GO:0045814">
    <property type="term" value="P:negative regulation of gene expression, epigenetic"/>
    <property type="evidence" value="ECO:0000266"/>
    <property type="project" value="RGD"/>
</dbReference>
<dbReference type="GO" id="GO:0001890">
    <property type="term" value="P:placenta development"/>
    <property type="evidence" value="ECO:0000266"/>
    <property type="project" value="RGD"/>
</dbReference>
<dbReference type="GO" id="GO:0009791">
    <property type="term" value="P:post-embryonic development"/>
    <property type="evidence" value="ECO:0000266"/>
    <property type="project" value="RGD"/>
</dbReference>
<dbReference type="GO" id="GO:0045471">
    <property type="term" value="P:response to ethanol"/>
    <property type="evidence" value="ECO:0000270"/>
    <property type="project" value="RGD"/>
</dbReference>
<dbReference type="GO" id="GO:0007283">
    <property type="term" value="P:spermatogenesis"/>
    <property type="evidence" value="ECO:0000250"/>
    <property type="project" value="UniProtKB"/>
</dbReference>
<dbReference type="GO" id="GO:0048863">
    <property type="term" value="P:stem cell differentiation"/>
    <property type="evidence" value="ECO:0000250"/>
    <property type="project" value="UniProtKB"/>
</dbReference>
<dbReference type="GO" id="GO:0141005">
    <property type="term" value="P:transposable element silencing by heterochromatin formation"/>
    <property type="evidence" value="ECO:0000250"/>
    <property type="project" value="UniProtKB"/>
</dbReference>
<dbReference type="GO" id="GO:0141196">
    <property type="term" value="P:transposable element silencing by piRNA-mediated DNA methylation"/>
    <property type="evidence" value="ECO:0000266"/>
    <property type="project" value="RGD"/>
</dbReference>
<dbReference type="Gene3D" id="3.40.50.150">
    <property type="entry name" value="Vaccinia Virus protein VP39"/>
    <property type="match status" value="1"/>
</dbReference>
<dbReference type="InterPro" id="IPR025766">
    <property type="entry name" value="ADD"/>
</dbReference>
<dbReference type="InterPro" id="IPR040552">
    <property type="entry name" value="DNMT3_ADD_GATA1-like"/>
</dbReference>
<dbReference type="InterPro" id="IPR049554">
    <property type="entry name" value="DNMT3_ADD_PHD"/>
</dbReference>
<dbReference type="InterPro" id="IPR029063">
    <property type="entry name" value="SAM-dependent_MTases_sf"/>
</dbReference>
<dbReference type="PANTHER" id="PTHR23068:SF13">
    <property type="entry name" value="DNA (CYTOSINE-5)-METHYLTRANSFERASE 3-LIKE"/>
    <property type="match status" value="1"/>
</dbReference>
<dbReference type="PANTHER" id="PTHR23068">
    <property type="entry name" value="DNA CYTOSINE-5- -METHYLTRANSFERASE 3-RELATED"/>
    <property type="match status" value="1"/>
</dbReference>
<dbReference type="Pfam" id="PF17980">
    <property type="entry name" value="ADD_DNMT3"/>
    <property type="match status" value="1"/>
</dbReference>
<dbReference type="Pfam" id="PF21255">
    <property type="entry name" value="DNMT3_ADD_GATA1-like"/>
    <property type="match status" value="1"/>
</dbReference>
<dbReference type="PROSITE" id="PS51533">
    <property type="entry name" value="ADD"/>
    <property type="match status" value="1"/>
</dbReference>
<keyword id="KW-0221">Differentiation</keyword>
<keyword id="KW-0479">Metal-binding</keyword>
<keyword id="KW-0539">Nucleus</keyword>
<keyword id="KW-1185">Reference proteome</keyword>
<keyword id="KW-0744">Spermatogenesis</keyword>
<keyword id="KW-0862">Zinc</keyword>
<keyword id="KW-0863">Zinc-finger</keyword>
<name>DNM3L_RAT</name>
<reference key="1">
    <citation type="journal article" date="2004" name="Nature">
        <title>Genome sequence of the Brown Norway rat yields insights into mammalian evolution.</title>
        <authorList>
            <person name="Gibbs R.A."/>
            <person name="Weinstock G.M."/>
            <person name="Metzker M.L."/>
            <person name="Muzny D.M."/>
            <person name="Sodergren E.J."/>
            <person name="Scherer S."/>
            <person name="Scott G."/>
            <person name="Steffen D."/>
            <person name="Worley K.C."/>
            <person name="Burch P.E."/>
            <person name="Okwuonu G."/>
            <person name="Hines S."/>
            <person name="Lewis L."/>
            <person name="Deramo C."/>
            <person name="Delgado O."/>
            <person name="Dugan-Rocha S."/>
            <person name="Miner G."/>
            <person name="Morgan M."/>
            <person name="Hawes A."/>
            <person name="Gill R."/>
            <person name="Holt R.A."/>
            <person name="Adams M.D."/>
            <person name="Amanatides P.G."/>
            <person name="Baden-Tillson H."/>
            <person name="Barnstead M."/>
            <person name="Chin S."/>
            <person name="Evans C.A."/>
            <person name="Ferriera S."/>
            <person name="Fosler C."/>
            <person name="Glodek A."/>
            <person name="Gu Z."/>
            <person name="Jennings D."/>
            <person name="Kraft C.L."/>
            <person name="Nguyen T."/>
            <person name="Pfannkoch C.M."/>
            <person name="Sitter C."/>
            <person name="Sutton G.G."/>
            <person name="Venter J.C."/>
            <person name="Woodage T."/>
            <person name="Smith D."/>
            <person name="Lee H.-M."/>
            <person name="Gustafson E."/>
            <person name="Cahill P."/>
            <person name="Kana A."/>
            <person name="Doucette-Stamm L."/>
            <person name="Weinstock K."/>
            <person name="Fechtel K."/>
            <person name="Weiss R.B."/>
            <person name="Dunn D.M."/>
            <person name="Green E.D."/>
            <person name="Blakesley R.W."/>
            <person name="Bouffard G.G."/>
            <person name="De Jong P.J."/>
            <person name="Osoegawa K."/>
            <person name="Zhu B."/>
            <person name="Marra M."/>
            <person name="Schein J."/>
            <person name="Bosdet I."/>
            <person name="Fjell C."/>
            <person name="Jones S."/>
            <person name="Krzywinski M."/>
            <person name="Mathewson C."/>
            <person name="Siddiqui A."/>
            <person name="Wye N."/>
            <person name="McPherson J."/>
            <person name="Zhao S."/>
            <person name="Fraser C.M."/>
            <person name="Shetty J."/>
            <person name="Shatsman S."/>
            <person name="Geer K."/>
            <person name="Chen Y."/>
            <person name="Abramzon S."/>
            <person name="Nierman W.C."/>
            <person name="Havlak P.H."/>
            <person name="Chen R."/>
            <person name="Durbin K.J."/>
            <person name="Egan A."/>
            <person name="Ren Y."/>
            <person name="Song X.-Z."/>
            <person name="Li B."/>
            <person name="Liu Y."/>
            <person name="Qin X."/>
            <person name="Cawley S."/>
            <person name="Cooney A.J."/>
            <person name="D'Souza L.M."/>
            <person name="Martin K."/>
            <person name="Wu J.Q."/>
            <person name="Gonzalez-Garay M.L."/>
            <person name="Jackson A.R."/>
            <person name="Kalafus K.J."/>
            <person name="McLeod M.P."/>
            <person name="Milosavljevic A."/>
            <person name="Virk D."/>
            <person name="Volkov A."/>
            <person name="Wheeler D.A."/>
            <person name="Zhang Z."/>
            <person name="Bailey J.A."/>
            <person name="Eichler E.E."/>
            <person name="Tuzun E."/>
            <person name="Birney E."/>
            <person name="Mongin E."/>
            <person name="Ureta-Vidal A."/>
            <person name="Woodwark C."/>
            <person name="Zdobnov E."/>
            <person name="Bork P."/>
            <person name="Suyama M."/>
            <person name="Torrents D."/>
            <person name="Alexandersson M."/>
            <person name="Trask B.J."/>
            <person name="Young J.M."/>
            <person name="Huang H."/>
            <person name="Wang H."/>
            <person name="Xing H."/>
            <person name="Daniels S."/>
            <person name="Gietzen D."/>
            <person name="Schmidt J."/>
            <person name="Stevens K."/>
            <person name="Vitt U."/>
            <person name="Wingrove J."/>
            <person name="Camara F."/>
            <person name="Mar Alba M."/>
            <person name="Abril J.F."/>
            <person name="Guigo R."/>
            <person name="Smit A."/>
            <person name="Dubchak I."/>
            <person name="Rubin E.M."/>
            <person name="Couronne O."/>
            <person name="Poliakov A."/>
            <person name="Huebner N."/>
            <person name="Ganten D."/>
            <person name="Goesele C."/>
            <person name="Hummel O."/>
            <person name="Kreitler T."/>
            <person name="Lee Y.-A."/>
            <person name="Monti J."/>
            <person name="Schulz H."/>
            <person name="Zimdahl H."/>
            <person name="Himmelbauer H."/>
            <person name="Lehrach H."/>
            <person name="Jacob H.J."/>
            <person name="Bromberg S."/>
            <person name="Gullings-Handley J."/>
            <person name="Jensen-Seaman M.I."/>
            <person name="Kwitek A.E."/>
            <person name="Lazar J."/>
            <person name="Pasko D."/>
            <person name="Tonellato P.J."/>
            <person name="Twigger S."/>
            <person name="Ponting C.P."/>
            <person name="Duarte J.M."/>
            <person name="Rice S."/>
            <person name="Goodstadt L."/>
            <person name="Beatson S.A."/>
            <person name="Emes R.D."/>
            <person name="Winter E.E."/>
            <person name="Webber C."/>
            <person name="Brandt P."/>
            <person name="Nyakatura G."/>
            <person name="Adetobi M."/>
            <person name="Chiaromonte F."/>
            <person name="Elnitski L."/>
            <person name="Eswara P."/>
            <person name="Hardison R.C."/>
            <person name="Hou M."/>
            <person name="Kolbe D."/>
            <person name="Makova K."/>
            <person name="Miller W."/>
            <person name="Nekrutenko A."/>
            <person name="Riemer C."/>
            <person name="Schwartz S."/>
            <person name="Taylor J."/>
            <person name="Yang S."/>
            <person name="Zhang Y."/>
            <person name="Lindpaintner K."/>
            <person name="Andrews T.D."/>
            <person name="Caccamo M."/>
            <person name="Clamp M."/>
            <person name="Clarke L."/>
            <person name="Curwen V."/>
            <person name="Durbin R.M."/>
            <person name="Eyras E."/>
            <person name="Searle S.M."/>
            <person name="Cooper G.M."/>
            <person name="Batzoglou S."/>
            <person name="Brudno M."/>
            <person name="Sidow A."/>
            <person name="Stone E.A."/>
            <person name="Payseur B.A."/>
            <person name="Bourque G."/>
            <person name="Lopez-Otin C."/>
            <person name="Puente X.S."/>
            <person name="Chakrabarti K."/>
            <person name="Chatterji S."/>
            <person name="Dewey C."/>
            <person name="Pachter L."/>
            <person name="Bray N."/>
            <person name="Yap V.B."/>
            <person name="Caspi A."/>
            <person name="Tesler G."/>
            <person name="Pevzner P.A."/>
            <person name="Haussler D."/>
            <person name="Roskin K.M."/>
            <person name="Baertsch R."/>
            <person name="Clawson H."/>
            <person name="Furey T.S."/>
            <person name="Hinrichs A.S."/>
            <person name="Karolchik D."/>
            <person name="Kent W.J."/>
            <person name="Rosenbloom K.R."/>
            <person name="Trumbower H."/>
            <person name="Weirauch M."/>
            <person name="Cooper D.N."/>
            <person name="Stenson P.D."/>
            <person name="Ma B."/>
            <person name="Brent M."/>
            <person name="Arumugam M."/>
            <person name="Shteynberg D."/>
            <person name="Copley R.R."/>
            <person name="Taylor M.S."/>
            <person name="Riethman H."/>
            <person name="Mudunuri U."/>
            <person name="Peterson J."/>
            <person name="Guyer M."/>
            <person name="Felsenfeld A."/>
            <person name="Old S."/>
            <person name="Mockrin S."/>
            <person name="Collins F.S."/>
        </authorList>
    </citation>
    <scope>NUCLEOTIDE SEQUENCE [LARGE SCALE GENOMIC DNA]</scope>
    <source>
        <strain>Brown Norway</strain>
    </source>
</reference>
<reference key="2">
    <citation type="journal article" date="2004" name="Genomics">
        <title>Identification of 11 pseudogenes in the DNA methyltransferase gene family in rodents and humans and implications for the functional loci.</title>
        <authorList>
            <person name="Lees-Murdock D.J."/>
            <person name="McLoughlin G.A."/>
            <person name="McDaid J.R."/>
            <person name="Quinn L.M."/>
            <person name="O'Doherty A."/>
            <person name="Hiripi L."/>
            <person name="Hack C.J."/>
            <person name="Walsh C.P."/>
        </authorList>
    </citation>
    <scope>IDENTIFICATION</scope>
</reference>
<sequence length="422" mass="48279">MGSRETPSSCSKTHETLNLETPESSSTDPDSPLEEQWPKSAPDLKEEDSMDMVLEDSKEPLTPSSPPTGREVIRYEVNVNQRNIEDICLCCGSLQVYAQHPLFEGGICAPCKDKFLETLFLYDEDGHQSYCTICCSGHTLFICESPDCTRCYCFECVDILVGPGTSERINAMACWVCFLCLPFSRSGLLQRRKKWRHQLKAFHDREGASPVEIYKTVSAWKRQPVRVLSLFGNIDKELKSLGFLESSSGSEGGTLKYVEDVTNVVRREVEKWGPFDLVYGSTQPLGYSCDRCPGWYMFQFHRILQYARPRQDSQQPFFWIFVDNLLLTEDDQETTVRFLQTEAVTLQDVRGRVLQNAMRVWSNIPGLKSKHADLTPKEEQSLQTQVRTRSKLAAQKVDSLVKYCLLPLREYFKYFSQNSLPL</sequence>
<feature type="chain" id="PRO_0000281744" description="DNA (cytosine-5)-methyltransferase 3-like">
    <location>
        <begin position="1"/>
        <end position="422"/>
    </location>
</feature>
<feature type="domain" description="ADD" evidence="3">
    <location>
        <begin position="76"/>
        <end position="208"/>
    </location>
</feature>
<feature type="zinc finger region" description="GATA-type; atypical" evidence="3">
    <location>
        <begin position="87"/>
        <end position="117"/>
    </location>
</feature>
<feature type="zinc finger region" description="PHD-type; atypical" evidence="3">
    <location>
        <begin position="128"/>
        <end position="184"/>
    </location>
</feature>
<feature type="region of interest" description="Disordered" evidence="4">
    <location>
        <begin position="1"/>
        <end position="50"/>
    </location>
</feature>
<feature type="compositionally biased region" description="Polar residues" evidence="4">
    <location>
        <begin position="1"/>
        <end position="11"/>
    </location>
</feature>
<feature type="compositionally biased region" description="Low complexity" evidence="4">
    <location>
        <begin position="20"/>
        <end position="30"/>
    </location>
</feature>
<accession>Q1LZ50</accession>
<organism>
    <name type="scientific">Rattus norvegicus</name>
    <name type="common">Rat</name>
    <dbReference type="NCBI Taxonomy" id="10116"/>
    <lineage>
        <taxon>Eukaryota</taxon>
        <taxon>Metazoa</taxon>
        <taxon>Chordata</taxon>
        <taxon>Craniata</taxon>
        <taxon>Vertebrata</taxon>
        <taxon>Euteleostomi</taxon>
        <taxon>Mammalia</taxon>
        <taxon>Eutheria</taxon>
        <taxon>Euarchontoglires</taxon>
        <taxon>Glires</taxon>
        <taxon>Rodentia</taxon>
        <taxon>Myomorpha</taxon>
        <taxon>Muroidea</taxon>
        <taxon>Muridae</taxon>
        <taxon>Murinae</taxon>
        <taxon>Rattus</taxon>
    </lineage>
</organism>